<evidence type="ECO:0000255" key="1">
    <source>
        <dbReference type="HAMAP-Rule" id="MF_00518"/>
    </source>
</evidence>
<comment type="function">
    <text evidence="1">An aminoacyl-tRNA editing enzyme that deacylates mischarged D-aminoacyl-tRNAs. Also deacylates mischarged glycyl-tRNA(Ala), protecting cells against glycine mischarging by AlaRS. Acts via tRNA-based rather than protein-based catalysis; rejects L-amino acids rather than detecting D-amino acids in the active site. By recycling D-aminoacyl-tRNA to D-amino acids and free tRNA molecules, this enzyme counteracts the toxicity associated with the formation of D-aminoacyl-tRNA entities in vivo and helps enforce protein L-homochirality.</text>
</comment>
<comment type="catalytic activity">
    <reaction evidence="1">
        <text>glycyl-tRNA(Ala) + H2O = tRNA(Ala) + glycine + H(+)</text>
        <dbReference type="Rhea" id="RHEA:53744"/>
        <dbReference type="Rhea" id="RHEA-COMP:9657"/>
        <dbReference type="Rhea" id="RHEA-COMP:13640"/>
        <dbReference type="ChEBI" id="CHEBI:15377"/>
        <dbReference type="ChEBI" id="CHEBI:15378"/>
        <dbReference type="ChEBI" id="CHEBI:57305"/>
        <dbReference type="ChEBI" id="CHEBI:78442"/>
        <dbReference type="ChEBI" id="CHEBI:78522"/>
        <dbReference type="EC" id="3.1.1.96"/>
    </reaction>
</comment>
<comment type="catalytic activity">
    <reaction evidence="1">
        <text>a D-aminoacyl-tRNA + H2O = a tRNA + a D-alpha-amino acid + H(+)</text>
        <dbReference type="Rhea" id="RHEA:13953"/>
        <dbReference type="Rhea" id="RHEA-COMP:10123"/>
        <dbReference type="Rhea" id="RHEA-COMP:10124"/>
        <dbReference type="ChEBI" id="CHEBI:15377"/>
        <dbReference type="ChEBI" id="CHEBI:15378"/>
        <dbReference type="ChEBI" id="CHEBI:59871"/>
        <dbReference type="ChEBI" id="CHEBI:78442"/>
        <dbReference type="ChEBI" id="CHEBI:79333"/>
        <dbReference type="EC" id="3.1.1.96"/>
    </reaction>
</comment>
<comment type="subunit">
    <text evidence="1">Homodimer.</text>
</comment>
<comment type="subcellular location">
    <subcellularLocation>
        <location evidence="1">Cytoplasm</location>
    </subcellularLocation>
</comment>
<comment type="domain">
    <text evidence="1">A Gly-cisPro motif from one monomer fits into the active site of the other monomer to allow specific chiral rejection of L-amino acids.</text>
</comment>
<comment type="similarity">
    <text evidence="1">Belongs to the DTD family.</text>
</comment>
<proteinExistence type="inferred from homology"/>
<gene>
    <name evidence="1" type="primary">dtd</name>
    <name type="ordered locus">Fjoh_0512</name>
</gene>
<protein>
    <recommendedName>
        <fullName evidence="1">D-aminoacyl-tRNA deacylase</fullName>
        <shortName evidence="1">DTD</shortName>
        <ecNumber evidence="1">3.1.1.96</ecNumber>
    </recommendedName>
    <alternativeName>
        <fullName evidence="1">Gly-tRNA(Ala) deacylase</fullName>
    </alternativeName>
</protein>
<accession>A5FMN0</accession>
<reference key="1">
    <citation type="journal article" date="2009" name="Appl. Environ. Microbiol.">
        <title>Novel features of the polysaccharide-digesting gliding bacterium Flavobacterium johnsoniae as revealed by genome sequence analysis.</title>
        <authorList>
            <person name="McBride M.J."/>
            <person name="Xie G."/>
            <person name="Martens E.C."/>
            <person name="Lapidus A."/>
            <person name="Henrissat B."/>
            <person name="Rhodes R.G."/>
            <person name="Goltsman E."/>
            <person name="Wang W."/>
            <person name="Xu J."/>
            <person name="Hunnicutt D.W."/>
            <person name="Staroscik A.M."/>
            <person name="Hoover T.R."/>
            <person name="Cheng Y.Q."/>
            <person name="Stein J.L."/>
        </authorList>
    </citation>
    <scope>NUCLEOTIDE SEQUENCE [LARGE SCALE GENOMIC DNA]</scope>
    <source>
        <strain>ATCC 17061 / DSM 2064 / JCM 8514 / BCRC 14874 / CCUG 350202 / NBRC 14942 / NCIMB 11054 / UW101</strain>
    </source>
</reference>
<sequence length="150" mass="16664">MRVIIQRVSQASVTVEGQKTADIQKGLLVLVGIEDADTQEDIDWLTGKIIKMRIFGDENDVMNCSVQDVDGDIIVVSQFTLHASTKKGNRPSYIKAAKPDFAIPMYENFVKSLEKEFGKKIQTGIFGADMKVNLLNDGPVTIVMDSKNRE</sequence>
<keyword id="KW-0963">Cytoplasm</keyword>
<keyword id="KW-0378">Hydrolase</keyword>
<keyword id="KW-0694">RNA-binding</keyword>
<keyword id="KW-0820">tRNA-binding</keyword>
<name>DTD_FLAJ1</name>
<organism>
    <name type="scientific">Flavobacterium johnsoniae (strain ATCC 17061 / DSM 2064 / JCM 8514 / BCRC 14874 / CCUG 350202 / NBRC 14942 / NCIMB 11054 / UW101)</name>
    <name type="common">Cytophaga johnsonae</name>
    <dbReference type="NCBI Taxonomy" id="376686"/>
    <lineage>
        <taxon>Bacteria</taxon>
        <taxon>Pseudomonadati</taxon>
        <taxon>Bacteroidota</taxon>
        <taxon>Flavobacteriia</taxon>
        <taxon>Flavobacteriales</taxon>
        <taxon>Flavobacteriaceae</taxon>
        <taxon>Flavobacterium</taxon>
    </lineage>
</organism>
<feature type="chain" id="PRO_1000081652" description="D-aminoacyl-tRNA deacylase">
    <location>
        <begin position="1"/>
        <end position="150"/>
    </location>
</feature>
<feature type="short sequence motif" description="Gly-cisPro motif, important for rejection of L-amino acids" evidence="1">
    <location>
        <begin position="138"/>
        <end position="139"/>
    </location>
</feature>
<dbReference type="EC" id="3.1.1.96" evidence="1"/>
<dbReference type="EMBL" id="CP000685">
    <property type="protein sequence ID" value="ABQ03547.1"/>
    <property type="molecule type" value="Genomic_DNA"/>
</dbReference>
<dbReference type="RefSeq" id="WP_012022603.1">
    <property type="nucleotide sequence ID" value="NC_009441.1"/>
</dbReference>
<dbReference type="SMR" id="A5FMN0"/>
<dbReference type="STRING" id="376686.Fjoh_0512"/>
<dbReference type="KEGG" id="fjo:Fjoh_0512"/>
<dbReference type="eggNOG" id="COG1490">
    <property type="taxonomic scope" value="Bacteria"/>
</dbReference>
<dbReference type="HOGENOM" id="CLU_076901_1_0_10"/>
<dbReference type="OrthoDB" id="9801395at2"/>
<dbReference type="Proteomes" id="UP000006694">
    <property type="component" value="Chromosome"/>
</dbReference>
<dbReference type="GO" id="GO:0005737">
    <property type="term" value="C:cytoplasm"/>
    <property type="evidence" value="ECO:0007669"/>
    <property type="project" value="UniProtKB-SubCell"/>
</dbReference>
<dbReference type="GO" id="GO:0051500">
    <property type="term" value="F:D-tyrosyl-tRNA(Tyr) deacylase activity"/>
    <property type="evidence" value="ECO:0007669"/>
    <property type="project" value="TreeGrafter"/>
</dbReference>
<dbReference type="GO" id="GO:0106026">
    <property type="term" value="F:Gly-tRNA(Ala) deacylase activity"/>
    <property type="evidence" value="ECO:0007669"/>
    <property type="project" value="UniProtKB-UniRule"/>
</dbReference>
<dbReference type="GO" id="GO:0043908">
    <property type="term" value="F:Ser(Gly)-tRNA(Ala) hydrolase activity"/>
    <property type="evidence" value="ECO:0007669"/>
    <property type="project" value="UniProtKB-UniRule"/>
</dbReference>
<dbReference type="GO" id="GO:0000049">
    <property type="term" value="F:tRNA binding"/>
    <property type="evidence" value="ECO:0007669"/>
    <property type="project" value="UniProtKB-UniRule"/>
</dbReference>
<dbReference type="GO" id="GO:0019478">
    <property type="term" value="P:D-amino acid catabolic process"/>
    <property type="evidence" value="ECO:0007669"/>
    <property type="project" value="UniProtKB-UniRule"/>
</dbReference>
<dbReference type="FunFam" id="3.50.80.10:FF:000001">
    <property type="entry name" value="D-aminoacyl-tRNA deacylase"/>
    <property type="match status" value="1"/>
</dbReference>
<dbReference type="Gene3D" id="3.50.80.10">
    <property type="entry name" value="D-tyrosyl-tRNA(Tyr) deacylase"/>
    <property type="match status" value="1"/>
</dbReference>
<dbReference type="HAMAP" id="MF_00518">
    <property type="entry name" value="Deacylase_Dtd"/>
    <property type="match status" value="1"/>
</dbReference>
<dbReference type="InterPro" id="IPR003732">
    <property type="entry name" value="Daa-tRNA_deacyls_DTD"/>
</dbReference>
<dbReference type="InterPro" id="IPR023509">
    <property type="entry name" value="DTD-like_sf"/>
</dbReference>
<dbReference type="NCBIfam" id="TIGR00256">
    <property type="entry name" value="D-aminoacyl-tRNA deacylase"/>
    <property type="match status" value="1"/>
</dbReference>
<dbReference type="PANTHER" id="PTHR10472:SF5">
    <property type="entry name" value="D-AMINOACYL-TRNA DEACYLASE 1"/>
    <property type="match status" value="1"/>
</dbReference>
<dbReference type="PANTHER" id="PTHR10472">
    <property type="entry name" value="D-TYROSYL-TRNA TYR DEACYLASE"/>
    <property type="match status" value="1"/>
</dbReference>
<dbReference type="Pfam" id="PF02580">
    <property type="entry name" value="Tyr_Deacylase"/>
    <property type="match status" value="1"/>
</dbReference>
<dbReference type="SUPFAM" id="SSF69500">
    <property type="entry name" value="DTD-like"/>
    <property type="match status" value="1"/>
</dbReference>